<feature type="chain" id="PRO_0000436869" description="Myb family transcription factor PHL12">
    <location>
        <begin position="1"/>
        <end position="235"/>
    </location>
</feature>
<feature type="domain" description="HTH myb-type" evidence="1">
    <location>
        <begin position="20"/>
        <end position="80"/>
    </location>
</feature>
<feature type="DNA-binding region" description="H-T-H motif" evidence="1">
    <location>
        <begin position="51"/>
        <end position="76"/>
    </location>
</feature>
<feature type="region of interest" description="Disordered" evidence="2">
    <location>
        <begin position="1"/>
        <end position="20"/>
    </location>
</feature>
<feature type="region of interest" description="Coiled coil" evidence="4">
    <location>
        <begin position="119"/>
        <end position="139"/>
    </location>
</feature>
<feature type="compositionally biased region" description="Basic and acidic residues" evidence="2">
    <location>
        <begin position="1"/>
        <end position="12"/>
    </location>
</feature>
<accession>Q8VYI2</accession>
<accession>Q9LTW1</accession>
<reference key="1">
    <citation type="journal article" date="2000" name="DNA Res.">
        <title>Structural analysis of Arabidopsis thaliana chromosome 3. I. Sequence features of the regions of 4,504,864 bp covered by sixty P1 and TAC clones.</title>
        <authorList>
            <person name="Sato S."/>
            <person name="Nakamura Y."/>
            <person name="Kaneko T."/>
            <person name="Katoh T."/>
            <person name="Asamizu E."/>
            <person name="Tabata S."/>
        </authorList>
    </citation>
    <scope>NUCLEOTIDE SEQUENCE [LARGE SCALE GENOMIC DNA]</scope>
    <source>
        <strain>cv. Columbia</strain>
    </source>
</reference>
<reference key="2">
    <citation type="journal article" date="2017" name="Plant J.">
        <title>Araport11: a complete reannotation of the Arabidopsis thaliana reference genome.</title>
        <authorList>
            <person name="Cheng C.Y."/>
            <person name="Krishnakumar V."/>
            <person name="Chan A.P."/>
            <person name="Thibaud-Nissen F."/>
            <person name="Schobel S."/>
            <person name="Town C.D."/>
        </authorList>
    </citation>
    <scope>GENOME REANNOTATION</scope>
    <source>
        <strain>cv. Columbia</strain>
    </source>
</reference>
<reference key="3">
    <citation type="journal article" date="2003" name="Science">
        <title>Empirical analysis of transcriptional activity in the Arabidopsis genome.</title>
        <authorList>
            <person name="Yamada K."/>
            <person name="Lim J."/>
            <person name="Dale J.M."/>
            <person name="Chen H."/>
            <person name="Shinn P."/>
            <person name="Palm C.J."/>
            <person name="Southwick A.M."/>
            <person name="Wu H.C."/>
            <person name="Kim C.J."/>
            <person name="Nguyen M."/>
            <person name="Pham P.K."/>
            <person name="Cheuk R.F."/>
            <person name="Karlin-Newmann G."/>
            <person name="Liu S.X."/>
            <person name="Lam B."/>
            <person name="Sakano H."/>
            <person name="Wu T."/>
            <person name="Yu G."/>
            <person name="Miranda M."/>
            <person name="Quach H.L."/>
            <person name="Tripp M."/>
            <person name="Chang C.H."/>
            <person name="Lee J.M."/>
            <person name="Toriumi M.J."/>
            <person name="Chan M.M."/>
            <person name="Tang C.C."/>
            <person name="Onodera C.S."/>
            <person name="Deng J.M."/>
            <person name="Akiyama K."/>
            <person name="Ansari Y."/>
            <person name="Arakawa T."/>
            <person name="Banh J."/>
            <person name="Banno F."/>
            <person name="Bowser L."/>
            <person name="Brooks S.Y."/>
            <person name="Carninci P."/>
            <person name="Chao Q."/>
            <person name="Choy N."/>
            <person name="Enju A."/>
            <person name="Goldsmith A.D."/>
            <person name="Gurjal M."/>
            <person name="Hansen N.F."/>
            <person name="Hayashizaki Y."/>
            <person name="Johnson-Hopson C."/>
            <person name="Hsuan V.W."/>
            <person name="Iida K."/>
            <person name="Karnes M."/>
            <person name="Khan S."/>
            <person name="Koesema E."/>
            <person name="Ishida J."/>
            <person name="Jiang P.X."/>
            <person name="Jones T."/>
            <person name="Kawai J."/>
            <person name="Kamiya A."/>
            <person name="Meyers C."/>
            <person name="Nakajima M."/>
            <person name="Narusaka M."/>
            <person name="Seki M."/>
            <person name="Sakurai T."/>
            <person name="Satou M."/>
            <person name="Tamse R."/>
            <person name="Vaysberg M."/>
            <person name="Wallender E.K."/>
            <person name="Wong C."/>
            <person name="Yamamura Y."/>
            <person name="Yuan S."/>
            <person name="Shinozaki K."/>
            <person name="Davis R.W."/>
            <person name="Theologis A."/>
            <person name="Ecker J.R."/>
        </authorList>
    </citation>
    <scope>NUCLEOTIDE SEQUENCE [LARGE SCALE MRNA]</scope>
    <source>
        <strain>cv. Columbia</strain>
    </source>
</reference>
<reference key="4">
    <citation type="journal article" date="2001" name="Genes Dev.">
        <title>A conserved MYB transcription factor involved in phosphate starvation signaling both in vascular plants and in unicellular algae.</title>
        <authorList>
            <person name="Rubio V."/>
            <person name="Linhares F."/>
            <person name="Solano R."/>
            <person name="Martin A.C."/>
            <person name="Iglesias J."/>
            <person name="Leyva A."/>
            <person name="Paz-Ares J."/>
        </authorList>
    </citation>
    <scope>GENE FAMILY</scope>
</reference>
<reference key="5">
    <citation type="journal article" date="2005" name="Plant Physiol.">
        <title>The xylem and phloem transcriptomes from secondary tissues of the Arabidopsis root-hypocotyl.</title>
        <authorList>
            <person name="Zhao C."/>
            <person name="Craig J.C."/>
            <person name="Petzold H.E."/>
            <person name="Dickerman A.W."/>
            <person name="Beers E.P."/>
        </authorList>
    </citation>
    <scope>TISSUE SPECIFICITY</scope>
</reference>
<proteinExistence type="evidence at transcript level"/>
<evidence type="ECO:0000255" key="1">
    <source>
        <dbReference type="PROSITE-ProRule" id="PRU00625"/>
    </source>
</evidence>
<evidence type="ECO:0000256" key="2">
    <source>
        <dbReference type="SAM" id="MobiDB-lite"/>
    </source>
</evidence>
<evidence type="ECO:0000269" key="3">
    <source>
    </source>
</evidence>
<evidence type="ECO:0000305" key="4"/>
<evidence type="ECO:0000312" key="5">
    <source>
        <dbReference type="Araport" id="AT3G12730"/>
    </source>
</evidence>
<evidence type="ECO:0000312" key="6">
    <source>
        <dbReference type="EMBL" id="AAL50101.1"/>
    </source>
</evidence>
<evidence type="ECO:0000312" key="7">
    <source>
        <dbReference type="EMBL" id="BAB02417.1"/>
    </source>
</evidence>
<organism evidence="6">
    <name type="scientific">Arabidopsis thaliana</name>
    <name type="common">Mouse-ear cress</name>
    <dbReference type="NCBI Taxonomy" id="3702"/>
    <lineage>
        <taxon>Eukaryota</taxon>
        <taxon>Viridiplantae</taxon>
        <taxon>Streptophyta</taxon>
        <taxon>Embryophyta</taxon>
        <taxon>Tracheophyta</taxon>
        <taxon>Spermatophyta</taxon>
        <taxon>Magnoliopsida</taxon>
        <taxon>eudicotyledons</taxon>
        <taxon>Gunneridae</taxon>
        <taxon>Pentapetalae</taxon>
        <taxon>rosids</taxon>
        <taxon>malvids</taxon>
        <taxon>Brassicales</taxon>
        <taxon>Brassicaceae</taxon>
        <taxon>Camelineae</taxon>
        <taxon>Arabidopsis</taxon>
    </lineage>
</organism>
<name>PHLC_ARATH</name>
<keyword id="KW-0175">Coiled coil</keyword>
<keyword id="KW-0238">DNA-binding</keyword>
<keyword id="KW-0539">Nucleus</keyword>
<keyword id="KW-1185">Reference proteome</keyword>
<keyword id="KW-0804">Transcription</keyword>
<keyword id="KW-0805">Transcription regulation</keyword>
<protein>
    <recommendedName>
        <fullName evidence="4">Myb family transcription factor PHL12</fullName>
    </recommendedName>
    <alternativeName>
        <fullName evidence="4">Protein PHR1-LIKE 12</fullName>
    </alternativeName>
</protein>
<comment type="subcellular location">
    <subcellularLocation>
        <location evidence="1">Nucleus</location>
    </subcellularLocation>
</comment>
<comment type="tissue specificity">
    <text evidence="3">Expressed in phloem and/or cambium.</text>
</comment>
<comment type="similarity">
    <text evidence="4">Belongs to the MYB-CC family.</text>
</comment>
<comment type="sequence caution" evidence="4">
    <conflict type="erroneous gene model prediction">
        <sequence resource="EMBL-CDS" id="BAB02417"/>
    </conflict>
</comment>
<sequence>MMQSREEIRDDSSSGLVLTTDPKPRLRWTTELHERFVDAVTHLGGPEKATPKTIMRVMGVKGLTLYHLKSHLQKFRLGKQPHKEHSQNHSICIRDTNRASMLDLRRNAVFTTSPLIIGRNMNEMQMEVQRRIEEEVVIERQVNQRIAAQGKYMESMLEKACETQEASLTKDYSTLFFDRTNICNNTSSIPIPWFEDHFPSSSSMDSTLILPDINSNFSLQDSRSSITKGRTVCLG</sequence>
<gene>
    <name evidence="4" type="primary">PHL12</name>
    <name evidence="5" type="ordered locus">At3g12730</name>
    <name evidence="7" type="ORF">MBK21.9</name>
</gene>
<dbReference type="EMBL" id="AB024033">
    <property type="protein sequence ID" value="BAB02417.1"/>
    <property type="status" value="ALT_SEQ"/>
    <property type="molecule type" value="Genomic_DNA"/>
</dbReference>
<dbReference type="EMBL" id="CP002686">
    <property type="protein sequence ID" value="AEE75240.1"/>
    <property type="molecule type" value="Genomic_DNA"/>
</dbReference>
<dbReference type="EMBL" id="AY070764">
    <property type="protein sequence ID" value="AAL50101.1"/>
    <property type="molecule type" value="mRNA"/>
</dbReference>
<dbReference type="EMBL" id="AY143916">
    <property type="protein sequence ID" value="AAN28855.1"/>
    <property type="molecule type" value="mRNA"/>
</dbReference>
<dbReference type="RefSeq" id="NP_187879.2">
    <property type="nucleotide sequence ID" value="NM_112109.4"/>
</dbReference>
<dbReference type="SMR" id="Q8VYI2"/>
<dbReference type="IntAct" id="Q8VYI2">
    <property type="interactions" value="1"/>
</dbReference>
<dbReference type="STRING" id="3702.Q8VYI2"/>
<dbReference type="PaxDb" id="3702-AT3G12730.1"/>
<dbReference type="ProteomicsDB" id="234999"/>
<dbReference type="EnsemblPlants" id="AT3G12730.1">
    <property type="protein sequence ID" value="AT3G12730.1"/>
    <property type="gene ID" value="AT3G12730"/>
</dbReference>
<dbReference type="GeneID" id="820455"/>
<dbReference type="Gramene" id="AT3G12730.1">
    <property type="protein sequence ID" value="AT3G12730.1"/>
    <property type="gene ID" value="AT3G12730"/>
</dbReference>
<dbReference type="KEGG" id="ath:AT3G12730"/>
<dbReference type="Araport" id="AT3G12730"/>
<dbReference type="TAIR" id="AT3G12730"/>
<dbReference type="eggNOG" id="ENOG502QQUN">
    <property type="taxonomic scope" value="Eukaryota"/>
</dbReference>
<dbReference type="HOGENOM" id="CLU_1442964_0_0_1"/>
<dbReference type="InParanoid" id="Q8VYI2"/>
<dbReference type="OMA" id="HSINIMD"/>
<dbReference type="PhylomeDB" id="Q8VYI2"/>
<dbReference type="PRO" id="PR:Q8VYI2"/>
<dbReference type="Proteomes" id="UP000006548">
    <property type="component" value="Chromosome 3"/>
</dbReference>
<dbReference type="ExpressionAtlas" id="Q8VYI2">
    <property type="expression patterns" value="baseline and differential"/>
</dbReference>
<dbReference type="GO" id="GO:0005634">
    <property type="term" value="C:nucleus"/>
    <property type="evidence" value="ECO:0007669"/>
    <property type="project" value="UniProtKB-SubCell"/>
</dbReference>
<dbReference type="GO" id="GO:0003677">
    <property type="term" value="F:DNA binding"/>
    <property type="evidence" value="ECO:0007669"/>
    <property type="project" value="UniProtKB-KW"/>
</dbReference>
<dbReference type="GO" id="GO:0003700">
    <property type="term" value="F:DNA-binding transcription factor activity"/>
    <property type="evidence" value="ECO:0000250"/>
    <property type="project" value="TAIR"/>
</dbReference>
<dbReference type="FunFam" id="1.10.10.60:FF:000002">
    <property type="entry name" value="Myb family transcription factor"/>
    <property type="match status" value="1"/>
</dbReference>
<dbReference type="Gene3D" id="1.10.10.60">
    <property type="entry name" value="Homeodomain-like"/>
    <property type="match status" value="1"/>
</dbReference>
<dbReference type="InterPro" id="IPR009057">
    <property type="entry name" value="Homeodomain-like_sf"/>
</dbReference>
<dbReference type="InterPro" id="IPR025756">
    <property type="entry name" value="Myb_CC_LHEQLE"/>
</dbReference>
<dbReference type="InterPro" id="IPR017930">
    <property type="entry name" value="Myb_dom"/>
</dbReference>
<dbReference type="InterPro" id="IPR006447">
    <property type="entry name" value="Myb_dom_plants"/>
</dbReference>
<dbReference type="InterPro" id="IPR046955">
    <property type="entry name" value="PHR1-like"/>
</dbReference>
<dbReference type="InterPro" id="IPR001005">
    <property type="entry name" value="SANT/Myb"/>
</dbReference>
<dbReference type="NCBIfam" id="TIGR01557">
    <property type="entry name" value="myb_SHAQKYF"/>
    <property type="match status" value="1"/>
</dbReference>
<dbReference type="PANTHER" id="PTHR31499">
    <property type="entry name" value="MYB FAMILY TRANSCRIPTION FACTOR PHL11"/>
    <property type="match status" value="1"/>
</dbReference>
<dbReference type="PANTHER" id="PTHR31499:SF42">
    <property type="entry name" value="MYB FAMILY TRANSCRIPTION FACTOR PHL12"/>
    <property type="match status" value="1"/>
</dbReference>
<dbReference type="Pfam" id="PF14379">
    <property type="entry name" value="Myb_CC_LHEQLE"/>
    <property type="match status" value="1"/>
</dbReference>
<dbReference type="Pfam" id="PF00249">
    <property type="entry name" value="Myb_DNA-binding"/>
    <property type="match status" value="1"/>
</dbReference>
<dbReference type="SUPFAM" id="SSF46689">
    <property type="entry name" value="Homeodomain-like"/>
    <property type="match status" value="1"/>
</dbReference>
<dbReference type="PROSITE" id="PS51294">
    <property type="entry name" value="HTH_MYB"/>
    <property type="match status" value="1"/>
</dbReference>